<dbReference type="EMBL" id="AF134123">
    <property type="protein sequence ID" value="AAD28770.1"/>
    <property type="molecule type" value="mRNA"/>
</dbReference>
<dbReference type="EMBL" id="AC007211">
    <property type="protein sequence ID" value="AAD25595.1"/>
    <property type="molecule type" value="Genomic_DNA"/>
</dbReference>
<dbReference type="EMBL" id="CP002685">
    <property type="protein sequence ID" value="AEC05893.1"/>
    <property type="molecule type" value="Genomic_DNA"/>
</dbReference>
<dbReference type="EMBL" id="AY054218">
    <property type="protein sequence ID" value="AAL06878.1"/>
    <property type="molecule type" value="mRNA"/>
</dbReference>
<dbReference type="EMBL" id="AY062563">
    <property type="protein sequence ID" value="AAL32641.1"/>
    <property type="molecule type" value="mRNA"/>
</dbReference>
<dbReference type="EMBL" id="AY066036">
    <property type="protein sequence ID" value="AAL47403.1"/>
    <property type="molecule type" value="mRNA"/>
</dbReference>
<dbReference type="EMBL" id="AY093372">
    <property type="protein sequence ID" value="AAM13371.1"/>
    <property type="molecule type" value="mRNA"/>
</dbReference>
<dbReference type="PIR" id="T52324">
    <property type="entry name" value="T52324"/>
</dbReference>
<dbReference type="RefSeq" id="NP_178582.1">
    <property type="nucleotide sequence ID" value="NM_126537.4"/>
</dbReference>
<dbReference type="SMR" id="Q9S7J7"/>
<dbReference type="FunCoup" id="Q9S7J7">
    <property type="interactions" value="558"/>
</dbReference>
<dbReference type="IntAct" id="Q9S7J7">
    <property type="interactions" value="1"/>
</dbReference>
<dbReference type="STRING" id="3702.Q9S7J7"/>
<dbReference type="iPTMnet" id="Q9S7J7"/>
<dbReference type="PaxDb" id="3702-AT2G05070.1"/>
<dbReference type="ProteomicsDB" id="239151"/>
<dbReference type="EnsemblPlants" id="AT2G05070.1">
    <property type="protein sequence ID" value="AT2G05070.1"/>
    <property type="gene ID" value="AT2G05070"/>
</dbReference>
<dbReference type="GeneID" id="815055"/>
<dbReference type="Gramene" id="AT2G05070.1">
    <property type="protein sequence ID" value="AT2G05070.1"/>
    <property type="gene ID" value="AT2G05070"/>
</dbReference>
<dbReference type="KEGG" id="ath:AT2G05070"/>
<dbReference type="Araport" id="AT2G05070"/>
<dbReference type="TAIR" id="AT2G05070">
    <property type="gene designation" value="LHCB2.2"/>
</dbReference>
<dbReference type="eggNOG" id="ENOG502QPU1">
    <property type="taxonomic scope" value="Eukaryota"/>
</dbReference>
<dbReference type="HOGENOM" id="CLU_057943_2_0_1"/>
<dbReference type="InParanoid" id="Q9S7J7"/>
<dbReference type="OMA" id="CEMATAK"/>
<dbReference type="OrthoDB" id="423598at2759"/>
<dbReference type="PhylomeDB" id="Q9S7J7"/>
<dbReference type="CD-CODE" id="4299E36E">
    <property type="entry name" value="Nucleolus"/>
</dbReference>
<dbReference type="PRO" id="PR:Q9S7J7"/>
<dbReference type="Proteomes" id="UP000006548">
    <property type="component" value="Chromosome 2"/>
</dbReference>
<dbReference type="ExpressionAtlas" id="Q9S7J7">
    <property type="expression patterns" value="baseline and differential"/>
</dbReference>
<dbReference type="GO" id="GO:0009507">
    <property type="term" value="C:chloroplast"/>
    <property type="evidence" value="ECO:0007005"/>
    <property type="project" value="TAIR"/>
</dbReference>
<dbReference type="GO" id="GO:0009941">
    <property type="term" value="C:chloroplast envelope"/>
    <property type="evidence" value="ECO:0007005"/>
    <property type="project" value="TAIR"/>
</dbReference>
<dbReference type="GO" id="GO:0009534">
    <property type="term" value="C:chloroplast thylakoid"/>
    <property type="evidence" value="ECO:0007005"/>
    <property type="project" value="TAIR"/>
</dbReference>
<dbReference type="GO" id="GO:0009535">
    <property type="term" value="C:chloroplast thylakoid membrane"/>
    <property type="evidence" value="ECO:0000314"/>
    <property type="project" value="UniProtKB"/>
</dbReference>
<dbReference type="GO" id="GO:0005739">
    <property type="term" value="C:mitochondrion"/>
    <property type="evidence" value="ECO:0007005"/>
    <property type="project" value="TAIR"/>
</dbReference>
<dbReference type="GO" id="GO:0009522">
    <property type="term" value="C:photosystem I"/>
    <property type="evidence" value="ECO:0000314"/>
    <property type="project" value="UniProtKB"/>
</dbReference>
<dbReference type="GO" id="GO:0009523">
    <property type="term" value="C:photosystem II"/>
    <property type="evidence" value="ECO:0000314"/>
    <property type="project" value="UniProtKB"/>
</dbReference>
<dbReference type="GO" id="GO:0000325">
    <property type="term" value="C:plant-type vacuole"/>
    <property type="evidence" value="ECO:0007005"/>
    <property type="project" value="TAIR"/>
</dbReference>
<dbReference type="GO" id="GO:0010287">
    <property type="term" value="C:plastoglobule"/>
    <property type="evidence" value="ECO:0007005"/>
    <property type="project" value="TAIR"/>
</dbReference>
<dbReference type="GO" id="GO:0009517">
    <property type="term" value="C:PSII associated light-harvesting complex II"/>
    <property type="evidence" value="ECO:0000314"/>
    <property type="project" value="UniProtKB"/>
</dbReference>
<dbReference type="GO" id="GO:0009579">
    <property type="term" value="C:thylakoid"/>
    <property type="evidence" value="ECO:0007005"/>
    <property type="project" value="TAIR"/>
</dbReference>
<dbReference type="GO" id="GO:0016168">
    <property type="term" value="F:chlorophyll binding"/>
    <property type="evidence" value="ECO:0007669"/>
    <property type="project" value="UniProtKB-KW"/>
</dbReference>
<dbReference type="GO" id="GO:0046872">
    <property type="term" value="F:metal ion binding"/>
    <property type="evidence" value="ECO:0007669"/>
    <property type="project" value="UniProtKB-KW"/>
</dbReference>
<dbReference type="GO" id="GO:0003729">
    <property type="term" value="F:mRNA binding"/>
    <property type="evidence" value="ECO:0000314"/>
    <property type="project" value="TAIR"/>
</dbReference>
<dbReference type="GO" id="GO:0071215">
    <property type="term" value="P:cellular response to abscisic acid stimulus"/>
    <property type="evidence" value="ECO:0000315"/>
    <property type="project" value="UniProtKB"/>
</dbReference>
<dbReference type="GO" id="GO:0042631">
    <property type="term" value="P:cellular response to water deprivation"/>
    <property type="evidence" value="ECO:0000315"/>
    <property type="project" value="UniProtKB"/>
</dbReference>
<dbReference type="GO" id="GO:0009768">
    <property type="term" value="P:photosynthesis, light harvesting in photosystem I"/>
    <property type="evidence" value="ECO:0000314"/>
    <property type="project" value="UniProtKB"/>
</dbReference>
<dbReference type="GO" id="GO:0009769">
    <property type="term" value="P:photosynthesis, light harvesting in photosystem II"/>
    <property type="evidence" value="ECO:0000314"/>
    <property type="project" value="UniProtKB"/>
</dbReference>
<dbReference type="GO" id="GO:1903428">
    <property type="term" value="P:positive regulation of reactive oxygen species biosynthetic process"/>
    <property type="evidence" value="ECO:0000315"/>
    <property type="project" value="UniProtKB"/>
</dbReference>
<dbReference type="GO" id="GO:0090333">
    <property type="term" value="P:regulation of stomatal closure"/>
    <property type="evidence" value="ECO:0000315"/>
    <property type="project" value="UniProtKB"/>
</dbReference>
<dbReference type="GO" id="GO:0009409">
    <property type="term" value="P:response to cold"/>
    <property type="evidence" value="ECO:0000270"/>
    <property type="project" value="UniProtKB"/>
</dbReference>
<dbReference type="GO" id="GO:0009269">
    <property type="term" value="P:response to desiccation"/>
    <property type="evidence" value="ECO:0000270"/>
    <property type="project" value="UniProtKB"/>
</dbReference>
<dbReference type="GO" id="GO:0010218">
    <property type="term" value="P:response to far red light"/>
    <property type="evidence" value="ECO:0000314"/>
    <property type="project" value="UniProtKB"/>
</dbReference>
<dbReference type="GO" id="GO:0009644">
    <property type="term" value="P:response to high light intensity"/>
    <property type="evidence" value="ECO:0000270"/>
    <property type="project" value="UniProtKB"/>
</dbReference>
<dbReference type="GO" id="GO:0009416">
    <property type="term" value="P:response to light stimulus"/>
    <property type="evidence" value="ECO:0000314"/>
    <property type="project" value="UniProtKB"/>
</dbReference>
<dbReference type="GO" id="GO:0009645">
    <property type="term" value="P:response to low light intensity stimulus"/>
    <property type="evidence" value="ECO:0000270"/>
    <property type="project" value="UniProtKB"/>
</dbReference>
<dbReference type="GO" id="GO:0010114">
    <property type="term" value="P:response to red light"/>
    <property type="evidence" value="ECO:0000314"/>
    <property type="project" value="UniProtKB"/>
</dbReference>
<dbReference type="FunFam" id="1.10.3460.10:FF:000001">
    <property type="entry name" value="Chlorophyll a-b binding protein, chloroplastic"/>
    <property type="match status" value="1"/>
</dbReference>
<dbReference type="Gene3D" id="1.10.3460.10">
    <property type="entry name" value="Chlorophyll a/b binding protein domain"/>
    <property type="match status" value="1"/>
</dbReference>
<dbReference type="InterPro" id="IPR001344">
    <property type="entry name" value="Chloro_AB-bd_pln"/>
</dbReference>
<dbReference type="InterPro" id="IPR022796">
    <property type="entry name" value="Chloroa_b-bind"/>
</dbReference>
<dbReference type="PANTHER" id="PTHR21649">
    <property type="entry name" value="CHLOROPHYLL A/B BINDING PROTEIN"/>
    <property type="match status" value="1"/>
</dbReference>
<dbReference type="Pfam" id="PF00504">
    <property type="entry name" value="Chloroa_b-bind"/>
    <property type="match status" value="1"/>
</dbReference>
<dbReference type="SUPFAM" id="SSF103511">
    <property type="entry name" value="Chlorophyll a-b binding protein"/>
    <property type="match status" value="1"/>
</dbReference>
<keyword id="KW-0148">Chlorophyll</keyword>
<keyword id="KW-0150">Chloroplast</keyword>
<keyword id="KW-0157">Chromophore</keyword>
<keyword id="KW-0460">Magnesium</keyword>
<keyword id="KW-0472">Membrane</keyword>
<keyword id="KW-0479">Metal-binding</keyword>
<keyword id="KW-0597">Phosphoprotein</keyword>
<keyword id="KW-0602">Photosynthesis</keyword>
<keyword id="KW-0603">Photosystem I</keyword>
<keyword id="KW-0604">Photosystem II</keyword>
<keyword id="KW-0934">Plastid</keyword>
<keyword id="KW-1185">Reference proteome</keyword>
<keyword id="KW-0793">Thylakoid</keyword>
<keyword id="KW-0809">Transit peptide</keyword>
<keyword id="KW-0812">Transmembrane</keyword>
<keyword id="KW-1133">Transmembrane helix</keyword>
<gene>
    <name evidence="13" type="primary">LHCB2.2</name>
    <name evidence="15" type="ordered locus">At2g05070</name>
    <name evidence="16" type="ORF">F1O13.20</name>
</gene>
<organism>
    <name type="scientific">Arabidopsis thaliana</name>
    <name type="common">Mouse-ear cress</name>
    <dbReference type="NCBI Taxonomy" id="3702"/>
    <lineage>
        <taxon>Eukaryota</taxon>
        <taxon>Viridiplantae</taxon>
        <taxon>Streptophyta</taxon>
        <taxon>Embryophyta</taxon>
        <taxon>Tracheophyta</taxon>
        <taxon>Spermatophyta</taxon>
        <taxon>Magnoliopsida</taxon>
        <taxon>eudicotyledons</taxon>
        <taxon>Gunneridae</taxon>
        <taxon>Pentapetalae</taxon>
        <taxon>rosids</taxon>
        <taxon>malvids</taxon>
        <taxon>Brassicales</taxon>
        <taxon>Brassicaceae</taxon>
        <taxon>Camelineae</taxon>
        <taxon>Arabidopsis</taxon>
    </lineage>
</organism>
<sequence>MATSAIQQSSFAGQTALKPSSDLIQKVGVLGGGRVTMRRTVKSTPQSIWYGPDRPKYLGPFSENTPSYLTGEYPGDYGWDTAGLSADPETFAKNRELEVIHSRWAMLGALGCTFPEILSKNGVKFGEAVWFKAGSQIFSEGGLDYLGNPNLIHAQSILAIWAVQVVLMGFIEGYRIGGGPLGEGLDPLYPGGAFDPLNLAEDPEAFSELKVKELKNGRLAMFSMFGFFVQAIVTGKGPIENLFDHLADPVANNAWSYATNFVPGK</sequence>
<evidence type="ECO:0000250" key="1">
    <source>
        <dbReference type="UniProtKB" id="P07371"/>
    </source>
</evidence>
<evidence type="ECO:0000250" key="2">
    <source>
        <dbReference type="UniProtKB" id="P12333"/>
    </source>
</evidence>
<evidence type="ECO:0000250" key="3">
    <source>
        <dbReference type="UniProtKB" id="P27521"/>
    </source>
</evidence>
<evidence type="ECO:0000255" key="4"/>
<evidence type="ECO:0000269" key="5">
    <source>
    </source>
</evidence>
<evidence type="ECO:0000269" key="6">
    <source>
    </source>
</evidence>
<evidence type="ECO:0000269" key="7">
    <source>
    </source>
</evidence>
<evidence type="ECO:0000269" key="8">
    <source>
    </source>
</evidence>
<evidence type="ECO:0000269" key="9">
    <source>
    </source>
</evidence>
<evidence type="ECO:0000269" key="10">
    <source>
    </source>
</evidence>
<evidence type="ECO:0000269" key="11">
    <source>
    </source>
</evidence>
<evidence type="ECO:0000269" key="12">
    <source>
    </source>
</evidence>
<evidence type="ECO:0000303" key="13">
    <source>
    </source>
</evidence>
<evidence type="ECO:0000305" key="14"/>
<evidence type="ECO:0000312" key="15">
    <source>
        <dbReference type="Araport" id="AT2G05070"/>
    </source>
</evidence>
<evidence type="ECO:0000312" key="16">
    <source>
        <dbReference type="EMBL" id="AAD25595.1"/>
    </source>
</evidence>
<name>CB22_ARATH</name>
<feature type="transit peptide" description="Chloroplast" evidence="2">
    <location>
        <begin position="1"/>
        <end position="37"/>
    </location>
</feature>
<feature type="chain" id="PRO_0000438438" description="Chlorophyll a-b binding protein 2.2, chloroplastic">
    <location>
        <begin position="38"/>
        <end position="265"/>
    </location>
</feature>
<feature type="transmembrane region" description="Helical" evidence="4">
    <location>
        <begin position="151"/>
        <end position="171"/>
    </location>
</feature>
<feature type="transmembrane region" description="Helical" evidence="4">
    <location>
        <begin position="219"/>
        <end position="239"/>
    </location>
</feature>
<feature type="binding site" description="axial binding residue" evidence="2">
    <location>
        <position position="57"/>
    </location>
    <ligand>
        <name>chlorophyll b</name>
        <dbReference type="ChEBI" id="CHEBI:61721"/>
        <label>1</label>
    </ligand>
    <ligandPart>
        <name>Mg</name>
        <dbReference type="ChEBI" id="CHEBI:25107"/>
    </ligandPart>
</feature>
<feature type="binding site" evidence="1">
    <location>
        <position position="79"/>
    </location>
    <ligand>
        <name>chlorophyll a</name>
        <dbReference type="ChEBI" id="CHEBI:58416"/>
        <label>1</label>
    </ligand>
</feature>
<feature type="binding site" evidence="1">
    <location>
        <position position="85"/>
    </location>
    <ligand>
        <name>chlorophyll a</name>
        <dbReference type="ChEBI" id="CHEBI:58416"/>
        <label>1</label>
    </ligand>
</feature>
<feature type="binding site" description="axial binding residue" evidence="2">
    <location>
        <position position="98"/>
    </location>
    <ligand>
        <name>chlorophyll a</name>
        <dbReference type="ChEBI" id="CHEBI:58416"/>
        <label>1</label>
    </ligand>
    <ligandPart>
        <name>Mg</name>
        <dbReference type="ChEBI" id="CHEBI:25107"/>
    </ligandPart>
</feature>
<feature type="binding site" description="axial binding residue" evidence="2">
    <location>
        <position position="101"/>
    </location>
    <ligand>
        <name>chlorophyll a</name>
        <dbReference type="ChEBI" id="CHEBI:58416"/>
        <label>2</label>
    </ligand>
    <ligandPart>
        <name>Mg</name>
        <dbReference type="ChEBI" id="CHEBI:25107"/>
    </ligandPart>
</feature>
<feature type="binding site" evidence="1">
    <location>
        <position position="103"/>
    </location>
    <ligand>
        <name>chlorophyll b</name>
        <dbReference type="ChEBI" id="CHEBI:61721"/>
        <label>2</label>
    </ligand>
</feature>
<feature type="binding site" evidence="1">
    <location>
        <position position="136"/>
    </location>
    <ligand>
        <name>chlorophyll a</name>
        <dbReference type="ChEBI" id="CHEBI:58416"/>
        <label>3</label>
    </ligand>
</feature>
<feature type="binding site" evidence="1">
    <location>
        <position position="146"/>
    </location>
    <ligand>
        <name>chlorophyll a</name>
        <dbReference type="ChEBI" id="CHEBI:58416"/>
        <label>3</label>
    </ligand>
</feature>
<feature type="binding site" description="axial binding residue" evidence="2">
    <location>
        <position position="152"/>
    </location>
    <ligand>
        <name>chlorophyll b</name>
        <dbReference type="ChEBI" id="CHEBI:61721"/>
        <label>2</label>
    </ligand>
    <ligandPart>
        <name>Mg</name>
        <dbReference type="ChEBI" id="CHEBI:25107"/>
    </ligandPart>
</feature>
<feature type="binding site" evidence="1">
    <location>
        <position position="156"/>
    </location>
    <ligand>
        <name>chlorophyll b</name>
        <dbReference type="ChEBI" id="CHEBI:61721"/>
        <label>3</label>
    </ligand>
</feature>
<feature type="binding site" evidence="1">
    <location>
        <position position="164"/>
    </location>
    <ligand>
        <name>chlorophyll b</name>
        <dbReference type="ChEBI" id="CHEBI:61721"/>
        <label>4</label>
    </ligand>
</feature>
<feature type="binding site" evidence="1">
    <location>
        <position position="164"/>
    </location>
    <ligand>
        <name>chlorophyll b</name>
        <dbReference type="ChEBI" id="CHEBI:61721"/>
        <label>5</label>
    </ligand>
</feature>
<feature type="binding site" description="axial binding residue" evidence="2">
    <location>
        <position position="172"/>
    </location>
    <ligand>
        <name>chlorophyll b</name>
        <dbReference type="ChEBI" id="CHEBI:61721"/>
        <label>3</label>
    </ligand>
    <ligandPart>
        <name>Mg</name>
        <dbReference type="ChEBI" id="CHEBI:25107"/>
    </ligandPart>
</feature>
<feature type="binding site" evidence="1">
    <location>
        <position position="175"/>
    </location>
    <ligand>
        <name>chlorophyll b</name>
        <dbReference type="ChEBI" id="CHEBI:61721"/>
        <label>4</label>
    </ligand>
</feature>
<feature type="binding site" evidence="1">
    <location>
        <position position="181"/>
    </location>
    <ligand>
        <name>chlorophyll b</name>
        <dbReference type="ChEBI" id="CHEBI:61721"/>
        <label>2</label>
    </ligand>
</feature>
<feature type="binding site" evidence="1">
    <location>
        <position position="212"/>
    </location>
    <ligand>
        <name>chlorophyll a</name>
        <dbReference type="ChEBI" id="CHEBI:58416"/>
        <label>5</label>
    </ligand>
</feature>
<feature type="binding site" description="axial binding residue" evidence="2">
    <location>
        <position position="213"/>
    </location>
    <ligand>
        <name>chlorophyll a</name>
        <dbReference type="ChEBI" id="CHEBI:58416"/>
        <label>3</label>
    </ligand>
    <ligandPart>
        <name>Mg</name>
        <dbReference type="ChEBI" id="CHEBI:25107"/>
    </ligandPart>
</feature>
<feature type="binding site" description="axial binding residue" evidence="2">
    <location>
        <position position="216"/>
    </location>
    <ligand>
        <name>chlorophyll a</name>
        <dbReference type="ChEBI" id="CHEBI:58416"/>
        <label>4</label>
    </ligand>
    <ligandPart>
        <name>Mg</name>
        <dbReference type="ChEBI" id="CHEBI:25107"/>
    </ligandPart>
</feature>
<feature type="binding site" evidence="1">
    <location>
        <position position="218"/>
    </location>
    <ligand>
        <name>chlorophyll a</name>
        <dbReference type="ChEBI" id="CHEBI:58416"/>
        <label>1</label>
    </ligand>
</feature>
<feature type="binding site" description="axial binding residue" evidence="2">
    <location>
        <position position="230"/>
    </location>
    <ligand>
        <name>chlorophyll a</name>
        <dbReference type="ChEBI" id="CHEBI:58416"/>
        <label>5</label>
    </ligand>
    <ligandPart>
        <name>Mg</name>
        <dbReference type="ChEBI" id="CHEBI:25107"/>
    </ligandPart>
</feature>
<feature type="binding site" description="axial binding residue" evidence="2">
    <location>
        <position position="245"/>
    </location>
    <ligand>
        <name>chlorophyll a</name>
        <dbReference type="ChEBI" id="CHEBI:58416"/>
        <label>6</label>
    </ligand>
    <ligandPart>
        <name>Mg</name>
        <dbReference type="ChEBI" id="CHEBI:25107"/>
    </ligandPart>
</feature>
<feature type="binding site" evidence="1">
    <location>
        <position position="254"/>
    </location>
    <ligand>
        <name>chlorophyll a</name>
        <dbReference type="ChEBI" id="CHEBI:58416"/>
        <label>6</label>
    </ligand>
</feature>
<feature type="binding site" evidence="1">
    <location>
        <position position="261"/>
    </location>
    <ligand>
        <name>chlorophyll b</name>
        <dbReference type="ChEBI" id="CHEBI:61721"/>
        <label>5</label>
    </ligand>
</feature>
<feature type="modified residue" description="Phosphothreonine; by STN7" evidence="9">
    <location>
        <position position="40"/>
    </location>
</feature>
<comment type="function">
    <text evidence="3 6 9 10 11 12">The light-harvesting complex (LHC) functions as a light receptor, it captures and delivers excitation energy to photosystems with which it is closely associated (By similarity). Mediates rapid phosphorylation and migration of LHCII-PSII to photosystem I (PSI) after transition to state 2 (red) light conditions, thus leading to the formation of PSI-PSII-LHCII and PSI-LHCII supercomplex to balance the relative excitation of PSI and PSII (PubMed:23888908, PubMed:23995216, PubMed:25194026, PubMed:26392145). Involved in the production of reactive oxygen species (ROS) and stomatal closure upon abscisic acid (ABA) treatment. Required to prevent water loss (PubMed:22143917).</text>
</comment>
<comment type="cofactor">
    <text evidence="2">Binds at least 14 chlorophylls (8 Chl-a and 6 Chl-b) and carotenoids such as lutein and neoxanthin.</text>
</comment>
<comment type="subunit">
    <text evidence="2 9 10 11 12">The LHC complex consists of chlorophyll a-b binding proteins (By similarity). Component of LHCII trimers made of LHCB1, LHCB2 and LHCB3 subunits (PubMed:23888908, PubMed:23995216, PubMed:25194026). Associated with super- (PSI-LHCII and PSII-LHCII) and mega-complexes (PSI-PSII-LHCII) containing LHCII and both photosystem (PS)I and PSII, in state 2 (red) light conditions (PubMed:23888908, PubMed:23995216, PubMed:25194026, PubMed:26392145).</text>
</comment>
<comment type="subcellular location">
    <subcellularLocation>
        <location evidence="10">Plastid</location>
        <location evidence="10">Chloroplast thylakoid membrane</location>
        <topology evidence="4">Multi-pass membrane protein</topology>
    </subcellularLocation>
</comment>
<comment type="induction">
    <text evidence="7 8">Accumulates at stronger levels in low light than in normal or high light; more expressed in growth chamber conditions than when grown in the field (PubMed:22236032). Repressed in leaves exposed to desiccation, cold and high irradiance via a metalloprotease-dependent proteolytic process (at protein level) (PubMed:23598180).</text>
</comment>
<comment type="PTM">
    <text evidence="5 9 10 12">Photoregulated by reversible but rapid phosphorylation by STN7 of its threonine residues under state 2 (red) light conditions (PubMed:23888908, PubMed:23995216, PubMed:26392145). Dephosphorylated by PPH1 in state 1 (far red) light conditions (PubMed:20176943, PubMed:23888908, PubMed:23995216, PubMed:26392145). Phosphorylation triggers the formation of the PSI-LHCII supercomplex (PubMed:26392145).</text>
</comment>
<comment type="disruption phenotype">
    <text evidence="6 11">In plants silenced with microRNAs, functional LHCII thylakoid protein complexes where LHCB2 is replaced by LHCB1. However these LHCII complexes are impaired in light state transitions, leading to stunted growth in high light (PubMed:25194026). Reduced reactive oxygen species (ROS) production in leaves and impaired stomatal closure in response to abscisic acid (ABA). Increased water loss and reduced resistance to drought, probably due to open stomata. Altered expression of other LHCB members (PubMed:22143917).</text>
</comment>
<comment type="similarity">
    <text evidence="14">Belongs to the light-harvesting chlorophyll a/b-binding (LHC) protein family.</text>
</comment>
<protein>
    <recommendedName>
        <fullName evidence="13">Chlorophyll a-b binding protein 2.2, chloroplastic</fullName>
    </recommendedName>
    <alternativeName>
        <fullName evidence="13">Photosystem II light harvesting complex gene 2.2</fullName>
    </alternativeName>
    <alternativeName>
        <fullName evidence="13">Protein LIGHT-HARVESTING CHLOROPHYLL B-BINDING 2.2</fullName>
    </alternativeName>
</protein>
<accession>Q9S7J7</accession>
<reference key="1">
    <citation type="journal article" date="1999" name="Trends Plant Sci.">
        <title>A guide to the Lhc genes and their relatives in Arabidopsis.</title>
        <authorList>
            <person name="Jansson S."/>
        </authorList>
    </citation>
    <scope>NUCLEOTIDE SEQUENCE [MRNA]</scope>
    <scope>GENE FAMILY</scope>
    <scope>NOMENCLATURE</scope>
</reference>
<reference key="2">
    <citation type="journal article" date="1999" name="Nature">
        <title>Sequence and analysis of chromosome 2 of the plant Arabidopsis thaliana.</title>
        <authorList>
            <person name="Lin X."/>
            <person name="Kaul S."/>
            <person name="Rounsley S.D."/>
            <person name="Shea T.P."/>
            <person name="Benito M.-I."/>
            <person name="Town C.D."/>
            <person name="Fujii C.Y."/>
            <person name="Mason T.M."/>
            <person name="Bowman C.L."/>
            <person name="Barnstead M.E."/>
            <person name="Feldblyum T.V."/>
            <person name="Buell C.R."/>
            <person name="Ketchum K.A."/>
            <person name="Lee J.J."/>
            <person name="Ronning C.M."/>
            <person name="Koo H.L."/>
            <person name="Moffat K.S."/>
            <person name="Cronin L.A."/>
            <person name="Shen M."/>
            <person name="Pai G."/>
            <person name="Van Aken S."/>
            <person name="Umayam L."/>
            <person name="Tallon L.J."/>
            <person name="Gill J.E."/>
            <person name="Adams M.D."/>
            <person name="Carrera A.J."/>
            <person name="Creasy T.H."/>
            <person name="Goodman H.M."/>
            <person name="Somerville C.R."/>
            <person name="Copenhaver G.P."/>
            <person name="Preuss D."/>
            <person name="Nierman W.C."/>
            <person name="White O."/>
            <person name="Eisen J.A."/>
            <person name="Salzberg S.L."/>
            <person name="Fraser C.M."/>
            <person name="Venter J.C."/>
        </authorList>
    </citation>
    <scope>NUCLEOTIDE SEQUENCE [LARGE SCALE GENOMIC DNA]</scope>
    <source>
        <strain>cv. Columbia</strain>
    </source>
</reference>
<reference key="3">
    <citation type="journal article" date="2017" name="Plant J.">
        <title>Araport11: a complete reannotation of the Arabidopsis thaliana reference genome.</title>
        <authorList>
            <person name="Cheng C.Y."/>
            <person name="Krishnakumar V."/>
            <person name="Chan A.P."/>
            <person name="Thibaud-Nissen F."/>
            <person name="Schobel S."/>
            <person name="Town C.D."/>
        </authorList>
    </citation>
    <scope>GENOME REANNOTATION</scope>
    <source>
        <strain>cv. Columbia</strain>
    </source>
</reference>
<reference key="4">
    <citation type="journal article" date="2003" name="Science">
        <title>Empirical analysis of transcriptional activity in the Arabidopsis genome.</title>
        <authorList>
            <person name="Yamada K."/>
            <person name="Lim J."/>
            <person name="Dale J.M."/>
            <person name="Chen H."/>
            <person name="Shinn P."/>
            <person name="Palm C.J."/>
            <person name="Southwick A.M."/>
            <person name="Wu H.C."/>
            <person name="Kim C.J."/>
            <person name="Nguyen M."/>
            <person name="Pham P.K."/>
            <person name="Cheuk R.F."/>
            <person name="Karlin-Newmann G."/>
            <person name="Liu S.X."/>
            <person name="Lam B."/>
            <person name="Sakano H."/>
            <person name="Wu T."/>
            <person name="Yu G."/>
            <person name="Miranda M."/>
            <person name="Quach H.L."/>
            <person name="Tripp M."/>
            <person name="Chang C.H."/>
            <person name="Lee J.M."/>
            <person name="Toriumi M.J."/>
            <person name="Chan M.M."/>
            <person name="Tang C.C."/>
            <person name="Onodera C.S."/>
            <person name="Deng J.M."/>
            <person name="Akiyama K."/>
            <person name="Ansari Y."/>
            <person name="Arakawa T."/>
            <person name="Banh J."/>
            <person name="Banno F."/>
            <person name="Bowser L."/>
            <person name="Brooks S.Y."/>
            <person name="Carninci P."/>
            <person name="Chao Q."/>
            <person name="Choy N."/>
            <person name="Enju A."/>
            <person name="Goldsmith A.D."/>
            <person name="Gurjal M."/>
            <person name="Hansen N.F."/>
            <person name="Hayashizaki Y."/>
            <person name="Johnson-Hopson C."/>
            <person name="Hsuan V.W."/>
            <person name="Iida K."/>
            <person name="Karnes M."/>
            <person name="Khan S."/>
            <person name="Koesema E."/>
            <person name="Ishida J."/>
            <person name="Jiang P.X."/>
            <person name="Jones T."/>
            <person name="Kawai J."/>
            <person name="Kamiya A."/>
            <person name="Meyers C."/>
            <person name="Nakajima M."/>
            <person name="Narusaka M."/>
            <person name="Seki M."/>
            <person name="Sakurai T."/>
            <person name="Satou M."/>
            <person name="Tamse R."/>
            <person name="Vaysberg M."/>
            <person name="Wallender E.K."/>
            <person name="Wong C."/>
            <person name="Yamamura Y."/>
            <person name="Yuan S."/>
            <person name="Shinozaki K."/>
            <person name="Davis R.W."/>
            <person name="Theologis A."/>
            <person name="Ecker J.R."/>
        </authorList>
    </citation>
    <scope>NUCLEOTIDE SEQUENCE [LARGE SCALE MRNA]</scope>
    <source>
        <strain>cv. Columbia</strain>
    </source>
</reference>
<reference key="5">
    <citation type="journal article" date="2010" name="Proc. Natl. Acad. Sci. U.S.A.">
        <title>The PPH1 phosphatase is specifically involved in LHCII dephosphorylation and state transitions in Arabidopsis.</title>
        <authorList>
            <person name="Shapiguzov A."/>
            <person name="Ingelsson B."/>
            <person name="Samol I."/>
            <person name="Andres C."/>
            <person name="Kessler F."/>
            <person name="Rochaix J.D."/>
            <person name="Vener A.V."/>
            <person name="Goldschmidt-Clermont M."/>
        </authorList>
    </citation>
    <scope>DEPHOSPHORYLATION BY PPH1</scope>
</reference>
<reference key="6">
    <citation type="journal article" date="2012" name="BMC Plant Biol.">
        <title>Arabidopsis plants grown in the field and climate chambers significantly differ in leaf morphology and photosystem components.</title>
        <authorList>
            <person name="Mishra Y."/>
            <person name="Jaenkaenpaeae H.J."/>
            <person name="Kiss A.Z."/>
            <person name="Funk C."/>
            <person name="Schroeder W.P."/>
            <person name="Jansson S."/>
        </authorList>
    </citation>
    <scope>INDUCTION BY LOW LIGHT</scope>
    <source>
        <strain>cv. Columbia</strain>
    </source>
</reference>
<reference key="7">
    <citation type="journal article" date="2012" name="J. Exp. Bot.">
        <title>Light-harvesting chlorophyll a/b-binding proteins are required for stomatal response to abscisic acid in Arabidopsis.</title>
        <authorList>
            <person name="Xu Y.-H."/>
            <person name="Liu R."/>
            <person name="Yan L."/>
            <person name="Liu Z.-Q."/>
            <person name="Jiang S.-C."/>
            <person name="Shen Y.-Y."/>
            <person name="Wang X.-F."/>
            <person name="Zhang D.-P."/>
        </authorList>
    </citation>
    <scope>FUNCTION</scope>
    <scope>DISRUPTION PHENOTYPE</scope>
    <source>
        <strain>cv. Columbia</strain>
    </source>
</reference>
<reference key="8">
    <citation type="journal article" date="2013" name="J. Plant Physiol.">
        <title>AtFtsH heterocomplex-mediated degradation of apoproteins of the major light harvesting complex of photosystem II (LHCII) in response to stresses.</title>
        <authorList>
            <person name="Lucinski R."/>
            <person name="Jackowski G."/>
        </authorList>
    </citation>
    <scope>REPRESSION BY DESICCATION; COLD AND HIGH IRRADIANCE</scope>
    <source>
        <strain>cv. Columbia</strain>
    </source>
</reference>
<reference key="9">
    <citation type="journal article" date="2013" name="J. Photochem. Photobiol. B">
        <title>Change in fast Chl a fluorescence transients, 2 dimensional protein profile and pigment protein interactions during state transitions in Arabidopsis thaliana.</title>
        <authorList>
            <person name="Nellaepalli S."/>
            <person name="Kodru S."/>
            <person name="Malavath T."/>
            <person name="Subramanyam R."/>
        </authorList>
    </citation>
    <scope>FUNCTION</scope>
    <scope>PHOSPHORYLATION</scope>
    <scope>SUBCELLULAR LOCATION</scope>
    <scope>SUBUNIT</scope>
</reference>
<reference key="10">
    <citation type="journal article" date="2013" name="Plant J.">
        <title>Very rapid phosphorylation kinetics suggest a unique role for Lhcb2 during state transitions in Arabidopsis.</title>
        <authorList>
            <person name="Leoni C."/>
            <person name="Pietrzykowska M."/>
            <person name="Kiss A.Z."/>
            <person name="Suorsa M."/>
            <person name="Ceci L.R."/>
            <person name="Aro E.M."/>
            <person name="Jansson S."/>
        </authorList>
    </citation>
    <scope>FUNCTION</scope>
    <scope>PHOSPHORYLATION AT THR-40 BY STN7</scope>
    <scope>SUBUNIT</scope>
</reference>
<reference key="11">
    <citation type="journal article" date="2014" name="Plant Cell">
        <title>The light-harvesting chlorophyll a/b binding proteins Lhcb1 and Lhcb2 play complementary roles during state transitions in Arabidopsis.</title>
        <authorList>
            <person name="Pietrzykowska M."/>
            <person name="Suorsa M."/>
            <person name="Semchonok D.A."/>
            <person name="Tikkanen M."/>
            <person name="Boekema E.J."/>
            <person name="Aro E.-M."/>
            <person name="Jansson S."/>
        </authorList>
    </citation>
    <scope>FUNCTION</scope>
    <scope>DISRUPTION PHENOTYPE</scope>
    <scope>SUBUNIT</scope>
    <source>
        <strain>cv. Columbia</strain>
    </source>
</reference>
<reference key="12">
    <citation type="journal article" date="2015" name="Biochim. Biophys. Acta">
        <title>The specific localizations of phosphorylated Lhcb1 and Lhcb2 isoforms reveal the role of Lhcb2 in the formation of the PSI-LHCII supercomplex in Arabidopsis during state transitions.</title>
        <authorList>
            <person name="Crepin A."/>
            <person name="Caffarri S."/>
        </authorList>
    </citation>
    <scope>FUNCTION</scope>
    <scope>SUBUNIT</scope>
    <scope>PHOSPHORYLATION BY STN7</scope>
    <scope>DEPHOSPHORYLATION BY PPH1</scope>
    <source>
        <strain>cv. Columbia</strain>
    </source>
</reference>
<proteinExistence type="evidence at protein level"/>